<accession>A3DND3</accession>
<evidence type="ECO:0000255" key="1">
    <source>
        <dbReference type="HAMAP-Rule" id="MF_00239"/>
    </source>
</evidence>
<proteinExistence type="inferred from homology"/>
<feature type="chain" id="PRO_1000005686" description="Cytidylate kinase">
    <location>
        <begin position="1"/>
        <end position="177"/>
    </location>
</feature>
<feature type="binding site" evidence="1">
    <location>
        <begin position="8"/>
        <end position="16"/>
    </location>
    <ligand>
        <name>ATP</name>
        <dbReference type="ChEBI" id="CHEBI:30616"/>
    </ligand>
</feature>
<keyword id="KW-0067">ATP-binding</keyword>
<keyword id="KW-0963">Cytoplasm</keyword>
<keyword id="KW-0418">Kinase</keyword>
<keyword id="KW-0547">Nucleotide-binding</keyword>
<keyword id="KW-1185">Reference proteome</keyword>
<keyword id="KW-0808">Transferase</keyword>
<reference key="1">
    <citation type="journal article" date="2009" name="BMC Genomics">
        <title>The complete genome sequence of Staphylothermus marinus reveals differences in sulfur metabolism among heterotrophic Crenarchaeota.</title>
        <authorList>
            <person name="Anderson I.J."/>
            <person name="Dharmarajan L."/>
            <person name="Rodriguez J."/>
            <person name="Hooper S."/>
            <person name="Porat I."/>
            <person name="Ulrich L.E."/>
            <person name="Elkins J.G."/>
            <person name="Mavromatis K."/>
            <person name="Sun H."/>
            <person name="Land M."/>
            <person name="Lapidus A."/>
            <person name="Lucas S."/>
            <person name="Barry K."/>
            <person name="Huber H."/>
            <person name="Zhulin I.B."/>
            <person name="Whitman W.B."/>
            <person name="Mukhopadhyay B."/>
            <person name="Woese C."/>
            <person name="Bristow J."/>
            <person name="Kyrpides N."/>
        </authorList>
    </citation>
    <scope>NUCLEOTIDE SEQUENCE [LARGE SCALE GENOMIC DNA]</scope>
    <source>
        <strain>ATCC 43588 / DSM 3639 / JCM 9404 / F1</strain>
    </source>
</reference>
<reference key="2">
    <citation type="journal article" date="2009" name="Stand. Genomic Sci.">
        <title>Complete genome sequence of Staphylothermus marinus Stetter and Fiala 1986 type strain F1.</title>
        <authorList>
            <person name="Anderson I.J."/>
            <person name="Sun H."/>
            <person name="Lapidus A."/>
            <person name="Copeland A."/>
            <person name="Glavina Del Rio T."/>
            <person name="Tice H."/>
            <person name="Dalin E."/>
            <person name="Lucas S."/>
            <person name="Barry K."/>
            <person name="Land M."/>
            <person name="Richardson P."/>
            <person name="Huber H."/>
            <person name="Kyrpides N.C."/>
        </authorList>
    </citation>
    <scope>NUCLEOTIDE SEQUENCE [LARGE SCALE GENOMIC DNA]</scope>
    <source>
        <strain>ATCC 43588 / DSM 3639 / JCM 9404 / F1</strain>
    </source>
</reference>
<sequence length="177" mass="20370">MVVIVISGPPGGGKTTQARRVAEYFSLRYYSAGMIFREIARSRGLSLEELSIIAANDPSIDIEIDKRTYEEALKGNVVLDGHLTAWIVSNIADIKIYVTAPLHIRIKRIAERDNIDLNKAMHETIIREYVQKKRFMEYYGIDIDDLSIFDLVINTEKLSVEKTFNIIREFIEKFLKE</sequence>
<protein>
    <recommendedName>
        <fullName evidence="1">Cytidylate kinase</fullName>
        <shortName evidence="1">CK</shortName>
        <ecNumber evidence="1">2.7.4.25</ecNumber>
    </recommendedName>
    <alternativeName>
        <fullName evidence="1">Cytidine monophosphate kinase</fullName>
        <shortName evidence="1">CMP kinase</shortName>
    </alternativeName>
</protein>
<comment type="catalytic activity">
    <reaction evidence="1">
        <text>CMP + ATP = CDP + ADP</text>
        <dbReference type="Rhea" id="RHEA:11600"/>
        <dbReference type="ChEBI" id="CHEBI:30616"/>
        <dbReference type="ChEBI" id="CHEBI:58069"/>
        <dbReference type="ChEBI" id="CHEBI:60377"/>
        <dbReference type="ChEBI" id="CHEBI:456216"/>
        <dbReference type="EC" id="2.7.4.25"/>
    </reaction>
</comment>
<comment type="catalytic activity">
    <reaction evidence="1">
        <text>dCMP + ATP = dCDP + ADP</text>
        <dbReference type="Rhea" id="RHEA:25094"/>
        <dbReference type="ChEBI" id="CHEBI:30616"/>
        <dbReference type="ChEBI" id="CHEBI:57566"/>
        <dbReference type="ChEBI" id="CHEBI:58593"/>
        <dbReference type="ChEBI" id="CHEBI:456216"/>
        <dbReference type="EC" id="2.7.4.25"/>
    </reaction>
</comment>
<comment type="subcellular location">
    <subcellularLocation>
        <location evidence="1">Cytoplasm</location>
    </subcellularLocation>
</comment>
<comment type="similarity">
    <text evidence="1">Belongs to the cytidylate kinase family. Type 2 subfamily.</text>
</comment>
<name>KCY_STAMF</name>
<dbReference type="EC" id="2.7.4.25" evidence="1"/>
<dbReference type="EMBL" id="CP000575">
    <property type="protein sequence ID" value="ABN70143.1"/>
    <property type="molecule type" value="Genomic_DNA"/>
</dbReference>
<dbReference type="RefSeq" id="WP_011839334.1">
    <property type="nucleotide sequence ID" value="NC_009033.1"/>
</dbReference>
<dbReference type="SMR" id="A3DND3"/>
<dbReference type="STRING" id="399550.Smar_1045"/>
<dbReference type="GeneID" id="4907945"/>
<dbReference type="KEGG" id="smr:Smar_1045"/>
<dbReference type="eggNOG" id="arCOG01037">
    <property type="taxonomic scope" value="Archaea"/>
</dbReference>
<dbReference type="HOGENOM" id="CLU_079959_1_0_2"/>
<dbReference type="OrthoDB" id="31096at2157"/>
<dbReference type="Proteomes" id="UP000000254">
    <property type="component" value="Chromosome"/>
</dbReference>
<dbReference type="GO" id="GO:0005737">
    <property type="term" value="C:cytoplasm"/>
    <property type="evidence" value="ECO:0007669"/>
    <property type="project" value="UniProtKB-SubCell"/>
</dbReference>
<dbReference type="GO" id="GO:0005524">
    <property type="term" value="F:ATP binding"/>
    <property type="evidence" value="ECO:0007669"/>
    <property type="project" value="UniProtKB-UniRule"/>
</dbReference>
<dbReference type="GO" id="GO:0036430">
    <property type="term" value="F:CMP kinase activity"/>
    <property type="evidence" value="ECO:0007669"/>
    <property type="project" value="RHEA"/>
</dbReference>
<dbReference type="GO" id="GO:0036431">
    <property type="term" value="F:dCMP kinase activity"/>
    <property type="evidence" value="ECO:0007669"/>
    <property type="project" value="RHEA"/>
</dbReference>
<dbReference type="GO" id="GO:0006220">
    <property type="term" value="P:pyrimidine nucleotide metabolic process"/>
    <property type="evidence" value="ECO:0007669"/>
    <property type="project" value="UniProtKB-UniRule"/>
</dbReference>
<dbReference type="CDD" id="cd02020">
    <property type="entry name" value="CMPK"/>
    <property type="match status" value="1"/>
</dbReference>
<dbReference type="Gene3D" id="3.40.50.300">
    <property type="entry name" value="P-loop containing nucleotide triphosphate hydrolases"/>
    <property type="match status" value="1"/>
</dbReference>
<dbReference type="HAMAP" id="MF_00239">
    <property type="entry name" value="Cytidyl_kinase_type2"/>
    <property type="match status" value="1"/>
</dbReference>
<dbReference type="InterPro" id="IPR011892">
    <property type="entry name" value="Cyt_kin_arch"/>
</dbReference>
<dbReference type="InterPro" id="IPR011994">
    <property type="entry name" value="Cytidylate_kinase_dom"/>
</dbReference>
<dbReference type="InterPro" id="IPR027417">
    <property type="entry name" value="P-loop_NTPase"/>
</dbReference>
<dbReference type="NCBIfam" id="TIGR02173">
    <property type="entry name" value="cyt_kin_arch"/>
    <property type="match status" value="1"/>
</dbReference>
<dbReference type="Pfam" id="PF13189">
    <property type="entry name" value="Cytidylate_kin2"/>
    <property type="match status" value="1"/>
</dbReference>
<dbReference type="SUPFAM" id="SSF52540">
    <property type="entry name" value="P-loop containing nucleoside triphosphate hydrolases"/>
    <property type="match status" value="1"/>
</dbReference>
<organism>
    <name type="scientific">Staphylothermus marinus (strain ATCC 43588 / DSM 3639 / JCM 9404 / F1)</name>
    <dbReference type="NCBI Taxonomy" id="399550"/>
    <lineage>
        <taxon>Archaea</taxon>
        <taxon>Thermoproteota</taxon>
        <taxon>Thermoprotei</taxon>
        <taxon>Desulfurococcales</taxon>
        <taxon>Desulfurococcaceae</taxon>
        <taxon>Staphylothermus</taxon>
    </lineage>
</organism>
<gene>
    <name evidence="1" type="primary">cmk</name>
    <name type="ordered locus">Smar_1045</name>
</gene>